<evidence type="ECO:0000250" key="1">
    <source>
        <dbReference type="UniProtKB" id="Q07337"/>
    </source>
</evidence>
<evidence type="ECO:0000255" key="2">
    <source>
        <dbReference type="PROSITE-ProRule" id="PRU00303"/>
    </source>
</evidence>
<evidence type="ECO:0000269" key="3">
    <source>
    </source>
</evidence>
<evidence type="ECO:0000269" key="4">
    <source>
    </source>
</evidence>
<evidence type="ECO:0000269" key="5">
    <source>
    </source>
</evidence>
<evidence type="ECO:0000269" key="6">
    <source>
    </source>
</evidence>
<evidence type="ECO:0000303" key="7">
    <source>
    </source>
</evidence>
<evidence type="ECO:0000303" key="8">
    <source>
    </source>
</evidence>
<evidence type="ECO:0000305" key="9"/>
<evidence type="ECO:0000305" key="10">
    <source>
    </source>
</evidence>
<evidence type="ECO:0000312" key="11">
    <source>
        <dbReference type="EMBL" id="AEL70078.1"/>
    </source>
</evidence>
<evidence type="ECO:0000312" key="12">
    <source>
        <dbReference type="EMBL" id="CAA44093.1"/>
    </source>
</evidence>
<gene>
    <name evidence="8" type="primary">ospC</name>
    <name evidence="7" type="synonym">pc</name>
    <name evidence="11" type="ordered locus">BafPKo_B0019</name>
</gene>
<dbReference type="EMBL" id="X62162">
    <property type="protein sequence ID" value="CAA44093.1"/>
    <property type="molecule type" value="Genomic_DNA"/>
</dbReference>
<dbReference type="EMBL" id="CP002934">
    <property type="protein sequence ID" value="AEL70078.1"/>
    <property type="molecule type" value="Genomic_DNA"/>
</dbReference>
<dbReference type="RefSeq" id="WP_011600714.1">
    <property type="nucleotide sequence ID" value="NC_008274.1"/>
</dbReference>
<dbReference type="SMR" id="Q0SL36"/>
<dbReference type="KEGG" id="baf:BAPKO_5018"/>
<dbReference type="KEGG" id="bafz:BafPKo_B0019"/>
<dbReference type="PATRIC" id="fig|390236.22.peg.850"/>
<dbReference type="HOGENOM" id="CLU_089887_0_0_12"/>
<dbReference type="OrthoDB" id="352157at2"/>
<dbReference type="Proteomes" id="UP000005216">
    <property type="component" value="Plasmid cp26"/>
</dbReference>
<dbReference type="GO" id="GO:0009279">
    <property type="term" value="C:cell outer membrane"/>
    <property type="evidence" value="ECO:0007669"/>
    <property type="project" value="UniProtKB-SubCell"/>
</dbReference>
<dbReference type="GO" id="GO:0009986">
    <property type="term" value="C:cell surface"/>
    <property type="evidence" value="ECO:0007669"/>
    <property type="project" value="UniProtKB-SubCell"/>
</dbReference>
<dbReference type="Gene3D" id="1.20.120.240">
    <property type="entry name" value="Lipoprotein, type 6"/>
    <property type="match status" value="1"/>
</dbReference>
<dbReference type="InterPro" id="IPR001800">
    <property type="entry name" value="Lipoprotein_OspC"/>
</dbReference>
<dbReference type="InterPro" id="IPR036437">
    <property type="entry name" value="OspC-like_sf"/>
</dbReference>
<dbReference type="Pfam" id="PF01441">
    <property type="entry name" value="Lipoprotein_6"/>
    <property type="match status" value="1"/>
</dbReference>
<dbReference type="SUPFAM" id="SSF63515">
    <property type="entry name" value="Outer surface protein C (OspC)"/>
    <property type="match status" value="1"/>
</dbReference>
<dbReference type="PROSITE" id="PS51257">
    <property type="entry name" value="PROKAR_LIPOPROTEIN"/>
    <property type="match status" value="1"/>
</dbReference>
<geneLocation type="plasmid" evidence="11">
    <name>cp26</name>
</geneLocation>
<reference evidence="12" key="1">
    <citation type="journal article" date="1992" name="Mol. Microbiol.">
        <title>Molecular analysis and expression of a Borrelia burgdorferi gene encoding a 22 kDa protein (pC) in Escherichia coli.</title>
        <authorList>
            <person name="Fuchs R."/>
            <person name="Jauris S."/>
            <person name="Lottspeich F."/>
            <person name="Preac-Mursic V."/>
            <person name="Wilske B."/>
            <person name="Soutschek E."/>
        </authorList>
    </citation>
    <scope>NUCLEOTIDE SEQUENCE [GENOMIC DNA]</scope>
    <scope>PROTEIN SEQUENCE OF 49-61 AND 177-187</scope>
    <scope>SUBCELLULAR LOCATION</scope>
    <source>
        <strain>PKo</strain>
    </source>
</reference>
<reference evidence="11" key="2">
    <citation type="journal article" date="2011" name="J. Bacteriol.">
        <title>Whole-genome sequences of two Borrelia afzelii and two Borrelia garinii Lyme disease agent isolates.</title>
        <authorList>
            <person name="Casjens S.R."/>
            <person name="Mongodin E.F."/>
            <person name="Qiu W.G."/>
            <person name="Dunn J.J."/>
            <person name="Luft B.J."/>
            <person name="Fraser-Liggett C.M."/>
            <person name="Schutzer S.E."/>
        </authorList>
    </citation>
    <scope>NUCLEOTIDE SEQUENCE [LARGE SCALE GENOMIC DNA]</scope>
    <source>
        <strain>PKo</strain>
        <plasmid evidence="11">cp26</plasmid>
    </source>
</reference>
<reference key="3">
    <citation type="journal article" date="1993" name="Infect. Immun.">
        <title>Immunological and molecular polymorphisms of OspC, an immunodominant major outer surface protein of Borrelia burgdorferi.</title>
        <authorList>
            <person name="Wilske B."/>
            <person name="Preace-Mursic V."/>
            <person name="Jauris S."/>
            <person name="Pradel I."/>
            <person name="Soutschek E."/>
            <person name="Schwab E."/>
            <person name="Wanner G."/>
        </authorList>
    </citation>
    <scope>SUBCELLULAR LOCATION</scope>
    <scope>IMMUNOGENIC IN MAN</scope>
    <source>
        <strain>PKo</strain>
    </source>
</reference>
<reference key="4">
    <citation type="journal article" date="1993" name="Med. Microbiol. Immunol.">
        <title>Genetic heterogenity of the genes coding for the outer surface protein C (OspC) and the flagellin of Borrelia burgdorferi.</title>
        <authorList>
            <person name="Jauris-Heipke S."/>
            <person name="Fuchs R."/>
            <person name="Motz M."/>
            <person name="Preac-Mursic V."/>
            <person name="Schwab E."/>
            <person name="Will G."/>
            <person name="Wilske B."/>
        </authorList>
    </citation>
    <scope>IMMUNOGENIC IN MAN</scope>
    <source>
        <strain>PKo</strain>
    </source>
</reference>
<reference key="5">
    <citation type="journal article" date="2008" name="J. Infect. Dis.">
        <title>Preferential protection of Borrelia burgdorferi sensu stricto by a Salp15 homologue in Ixodes ricinus saliva.</title>
        <authorList>
            <person name="Hovius J.W."/>
            <person name="Schuijt T.J."/>
            <person name="de Groot K.A."/>
            <person name="Roelofs J.J."/>
            <person name="Oei G.A."/>
            <person name="Marquart J.A."/>
            <person name="de Beer R."/>
            <person name="van 't Veer C."/>
            <person name="van der Poll T."/>
            <person name="Ramamoorthi N."/>
            <person name="Fikrig E."/>
            <person name="van Dam A.P."/>
        </authorList>
    </citation>
    <scope>FUNCTION</scope>
    <scope>INTERACTION WITH I.RICINUS IRIC-1</scope>
    <source>
        <strain>PKo</strain>
    </source>
</reference>
<name>OSPC_BORAP</name>
<feature type="signal peptide" evidence="2">
    <location>
        <begin position="1"/>
        <end position="18"/>
    </location>
</feature>
<feature type="chain" id="PRO_5004176840" description="Outer surface protein C" evidence="2">
    <location>
        <begin position="19"/>
        <end position="212"/>
    </location>
</feature>
<feature type="lipid moiety-binding region" description="N-palmitoyl cysteine" evidence="2">
    <location>
        <position position="19"/>
    </location>
</feature>
<feature type="lipid moiety-binding region" description="S-diacylglycerol cysteine" evidence="2">
    <location>
        <position position="19"/>
    </location>
</feature>
<feature type="sequence conflict" description="In Ref. 1; AA sequence." evidence="9" ref="1">
    <original>F</original>
    <variation>T</variation>
    <location>
        <position position="56"/>
    </location>
</feature>
<organism>
    <name type="scientific">Borreliella afzelii (strain PKo)</name>
    <name type="common">Borrelia afzelii</name>
    <dbReference type="NCBI Taxonomy" id="390236"/>
    <lineage>
        <taxon>Bacteria</taxon>
        <taxon>Pseudomonadati</taxon>
        <taxon>Spirochaetota</taxon>
        <taxon>Spirochaetia</taxon>
        <taxon>Spirochaetales</taxon>
        <taxon>Borreliaceae</taxon>
        <taxon>Borreliella</taxon>
    </lineage>
</organism>
<proteinExistence type="evidence at protein level"/>
<sequence length="212" mass="22500">MKKNTLSAILMTLFLFISCNNSGKGGDSASTNPADESAKGPNLTEISKKITDSNAFVLAVKEVETLVLSIDELAKKAIGQKIDNNNGLAALNNQNGSLLAGAYAISTLITEKLSKLKNLEELKTEIAKAKKCSEEFTNKLKSGHADLGKQDATDDHAKAAILKTHATTDKGAKEFKDLFESVEGLLKAAQVALTNSVKELTSPVVAESPKKP</sequence>
<keyword id="KW-0998">Cell outer membrane</keyword>
<keyword id="KW-0903">Direct protein sequencing</keyword>
<keyword id="KW-0449">Lipoprotein</keyword>
<keyword id="KW-0472">Membrane</keyword>
<keyword id="KW-0564">Palmitate</keyword>
<keyword id="KW-0614">Plasmid</keyword>
<keyword id="KW-0732">Signal</keyword>
<keyword id="KW-0843">Virulence</keyword>
<accession>Q0SL36</accession>
<accession>Q08137</accession>
<accession>Q9S3P4</accession>
<protein>
    <recommendedName>
        <fullName evidence="8">Outer surface protein C</fullName>
        <shortName evidence="7">pC</shortName>
    </recommendedName>
</protein>
<comment type="function">
    <text evidence="1 4 5 6">Major immunodominant protein in mammalian hosts (PubMed:8098841, PubMed:8478108). Required for initial stages of mammalian infection. Inhibits macrophage-mediated phagocytosis of the bacteria. Binds human plasminogen; this probably confers an extracellular protease activity on the bacteria that allows it to traverse tissue (By similarity). Unlike closely related strain B31, its interaction with Ixodes ricinus salivary protein Iric-1 does not protect against antibody-mediated destruction in vitro (PubMed:18752445).</text>
</comment>
<comment type="subunit">
    <text evidence="1 4">Homodimer (By similarity). Interacts with tick Ixodes ricinus salivary protein Iric-1 (PubMed:18752445). Binds human (host) plasminogen (By similarity).</text>
</comment>
<comment type="subcellular location">
    <subcellularLocation>
        <location evidence="10">Cell outer membrane</location>
        <topology evidence="2">Lipid-anchor</topology>
    </subcellularLocation>
    <subcellularLocation>
        <location evidence="3 6">Cell surface</location>
    </subcellularLocation>
</comment>
<comment type="PTM">
    <text evidence="3">The N-terminus is blocked.</text>
</comment>
<comment type="miscellaneous">
    <text evidence="9">The causative agent of Lyme disease, the bacteria has an enzootic lifestyle. Larval ticks are infected with bacteria during feeding on infected hosts (mostly mammals) which retain the bacteria during subsequent developmental stages. It is transmitted to the next host when it is bitten by ticks. During tick feeding (which can last for several days), bacterial migrate from the tick midgut to the salivary gland where they are transmitted to the host.</text>
</comment>
<comment type="similarity">
    <text evidence="9">Belongs to the OspC lipoprotein family.</text>
</comment>